<name>TURA_SYNTU</name>
<organism evidence="3">
    <name type="scientific">Synoicum turgens</name>
    <name type="common">Colonial ascidian</name>
    <dbReference type="NCBI Taxonomy" id="2697470"/>
    <lineage>
        <taxon>Eukaryota</taxon>
        <taxon>Metazoa</taxon>
        <taxon>Chordata</taxon>
        <taxon>Tunicata</taxon>
        <taxon>Ascidiacea</taxon>
        <taxon>Aplousobranchia</taxon>
        <taxon>Polyclinidae</taxon>
        <taxon>Synoicum</taxon>
    </lineage>
</organism>
<proteinExistence type="evidence at protein level"/>
<feature type="peptide" id="PRO_0000449795" description="Turgencin-A">
    <location>
        <begin position="1"/>
        <end position="36"/>
    </location>
</feature>
<feature type="modified residue" description="Methionine sulfoxide" evidence="2">
    <location>
        <position position="10"/>
    </location>
</feature>
<feature type="modified residue" description="Valine amide" evidence="2">
    <location>
        <position position="36"/>
    </location>
</feature>
<feature type="disulfide bond" evidence="1">
    <location>
        <begin position="8"/>
        <end position="33"/>
    </location>
</feature>
<feature type="disulfide bond" evidence="1">
    <location>
        <begin position="12"/>
        <end position="29"/>
    </location>
</feature>
<feature type="disulfide bond" evidence="1">
    <location>
        <begin position="17"/>
        <end position="26"/>
    </location>
</feature>
<keyword id="KW-0027">Amidation</keyword>
<keyword id="KW-0929">Antimicrobial</keyword>
<keyword id="KW-0903">Direct protein sequencing</keyword>
<keyword id="KW-1015">Disulfide bond</keyword>
<keyword id="KW-0558">Oxidation</keyword>
<keyword id="KW-0964">Secreted</keyword>
<reference evidence="4" key="1">
    <citation type="journal article" date="2020" name="Mar. Drugs">
        <title>Isolation and Characterization of Antimicrobial Peptides with Unusual Disulfide Connectivity from the Colonial Ascidian Synoicum turgens.</title>
        <authorList>
            <person name="Hansen I.K.O."/>
            <person name="Isaksson J."/>
            <person name="Poth A.G."/>
            <person name="Hansen K.O."/>
            <person name="Andersen A.J.C."/>
            <person name="Richard C.S.M."/>
            <person name="Blencke H.M."/>
            <person name="Stensvaag K."/>
            <person name="Craik D.J."/>
            <person name="Haug T."/>
        </authorList>
    </citation>
    <scope>PROTEIN SEQUENCE</scope>
    <scope>FUNCTION</scope>
    <scope>SUBCELLULAR LOCATION</scope>
    <scope>MASS SPECTROMETRY</scope>
    <scope>DISULFIDE BONDS</scope>
    <scope>OXIDATION AT MET-10</scope>
    <scope>AMIDATION AT VAL-36</scope>
</reference>
<comment type="function">
    <text evidence="2">Has antimicrobial activity against Gram-positive bacteria (C.glutamicum ATCC 13032 (MIC=0.4 uM), B.subtilis ATCC 23857 (MIC=0.4 uM) and S.aureus ATCC 9144 (MIC=6.3 uM)) and Gram-negative bacteria (E.coli ATCC 25922 (MIC=0.8 uM) and P.aeruginosa ATCC 27853 (MIC=1.6 uM)).</text>
</comment>
<comment type="subcellular location">
    <subcellularLocation>
        <location evidence="2">Secreted</location>
    </subcellularLocation>
</comment>
<comment type="mass spectrometry"/>
<comment type="mass spectrometry">
    <text>With oxidation at Met-10.</text>
</comment>
<comment type="miscellaneous">
    <text evidence="2">Displays cytotoxic effects on human melanoma cancer cell line A2058 (IC(50)=1.4 uM) and the human fibroblast cell line MRC-5 (IC(50)=4.8 uM).</text>
</comment>
<protein>
    <recommendedName>
        <fullName evidence="3">Turgencin-A</fullName>
    </recommendedName>
</protein>
<sequence>GPKTKAACKMACKLATCGKKPGGWKCKLCELGCDAV</sequence>
<accession>C0HLN5</accession>
<evidence type="ECO:0000250" key="1">
    <source>
        <dbReference type="UniProtKB" id="C0HLN6"/>
    </source>
</evidence>
<evidence type="ECO:0000269" key="2">
    <source>
    </source>
</evidence>
<evidence type="ECO:0000303" key="3">
    <source>
    </source>
</evidence>
<evidence type="ECO:0000305" key="4"/>
<dbReference type="GO" id="GO:0005576">
    <property type="term" value="C:extracellular region"/>
    <property type="evidence" value="ECO:0007669"/>
    <property type="project" value="UniProtKB-SubCell"/>
</dbReference>
<dbReference type="GO" id="GO:0051715">
    <property type="term" value="P:cytolysis in another organism"/>
    <property type="evidence" value="ECO:0000314"/>
    <property type="project" value="UniProtKB"/>
</dbReference>
<dbReference type="GO" id="GO:0050829">
    <property type="term" value="P:defense response to Gram-negative bacterium"/>
    <property type="evidence" value="ECO:0000314"/>
    <property type="project" value="UniProtKB"/>
</dbReference>
<dbReference type="GO" id="GO:0050830">
    <property type="term" value="P:defense response to Gram-positive bacterium"/>
    <property type="evidence" value="ECO:0000314"/>
    <property type="project" value="UniProtKB"/>
</dbReference>